<keyword id="KW-0963">Cytoplasm</keyword>
<keyword id="KW-0251">Elongation factor</keyword>
<keyword id="KW-0648">Protein biosynthesis</keyword>
<dbReference type="EMBL" id="CP000920">
    <property type="protein sequence ID" value="ACO20295.1"/>
    <property type="molecule type" value="Genomic_DNA"/>
</dbReference>
<dbReference type="RefSeq" id="WP_000808063.1">
    <property type="nucleotide sequence ID" value="NC_012467.1"/>
</dbReference>
<dbReference type="SMR" id="C1CNI7"/>
<dbReference type="GeneID" id="45652566"/>
<dbReference type="KEGG" id="spp:SPP_2266"/>
<dbReference type="HOGENOM" id="CLU_047155_0_1_9"/>
<dbReference type="GO" id="GO:0005737">
    <property type="term" value="C:cytoplasm"/>
    <property type="evidence" value="ECO:0007669"/>
    <property type="project" value="UniProtKB-SubCell"/>
</dbReference>
<dbReference type="GO" id="GO:0003746">
    <property type="term" value="F:translation elongation factor activity"/>
    <property type="evidence" value="ECO:0007669"/>
    <property type="project" value="UniProtKB-UniRule"/>
</dbReference>
<dbReference type="CDD" id="cd14275">
    <property type="entry name" value="UBA_EF-Ts"/>
    <property type="match status" value="1"/>
</dbReference>
<dbReference type="FunFam" id="1.10.286.20:FF:000004">
    <property type="entry name" value="Elongation factor Ts"/>
    <property type="match status" value="1"/>
</dbReference>
<dbReference type="FunFam" id="1.10.8.10:FF:000001">
    <property type="entry name" value="Elongation factor Ts"/>
    <property type="match status" value="1"/>
</dbReference>
<dbReference type="FunFam" id="3.30.479.20:FF:000009">
    <property type="entry name" value="Elongation factor Ts"/>
    <property type="match status" value="1"/>
</dbReference>
<dbReference type="FunFam" id="3.30.479.20:FF:000013">
    <property type="entry name" value="Elongation factor Ts"/>
    <property type="match status" value="1"/>
</dbReference>
<dbReference type="FunFam" id="3.30.479.20:FF:000016">
    <property type="entry name" value="Elongation factor Ts"/>
    <property type="match status" value="1"/>
</dbReference>
<dbReference type="Gene3D" id="1.10.286.20">
    <property type="match status" value="1"/>
</dbReference>
<dbReference type="Gene3D" id="1.10.8.10">
    <property type="entry name" value="DNA helicase RuvA subunit, C-terminal domain"/>
    <property type="match status" value="1"/>
</dbReference>
<dbReference type="Gene3D" id="3.30.479.20">
    <property type="entry name" value="Elongation factor Ts, dimerisation domain"/>
    <property type="match status" value="2"/>
</dbReference>
<dbReference type="HAMAP" id="MF_00050">
    <property type="entry name" value="EF_Ts"/>
    <property type="match status" value="1"/>
</dbReference>
<dbReference type="InterPro" id="IPR036402">
    <property type="entry name" value="EF-Ts_dimer_sf"/>
</dbReference>
<dbReference type="InterPro" id="IPR001816">
    <property type="entry name" value="Transl_elong_EFTs/EF1B"/>
</dbReference>
<dbReference type="InterPro" id="IPR014039">
    <property type="entry name" value="Transl_elong_EFTs/EF1B_dimer"/>
</dbReference>
<dbReference type="InterPro" id="IPR018101">
    <property type="entry name" value="Transl_elong_Ts_CS"/>
</dbReference>
<dbReference type="InterPro" id="IPR009060">
    <property type="entry name" value="UBA-like_sf"/>
</dbReference>
<dbReference type="NCBIfam" id="TIGR00116">
    <property type="entry name" value="tsf"/>
    <property type="match status" value="1"/>
</dbReference>
<dbReference type="PANTHER" id="PTHR11741">
    <property type="entry name" value="ELONGATION FACTOR TS"/>
    <property type="match status" value="1"/>
</dbReference>
<dbReference type="PANTHER" id="PTHR11741:SF0">
    <property type="entry name" value="ELONGATION FACTOR TS, MITOCHONDRIAL"/>
    <property type="match status" value="1"/>
</dbReference>
<dbReference type="Pfam" id="PF00889">
    <property type="entry name" value="EF_TS"/>
    <property type="match status" value="1"/>
</dbReference>
<dbReference type="SUPFAM" id="SSF54713">
    <property type="entry name" value="Elongation factor Ts (EF-Ts), dimerisation domain"/>
    <property type="match status" value="2"/>
</dbReference>
<dbReference type="SUPFAM" id="SSF46934">
    <property type="entry name" value="UBA-like"/>
    <property type="match status" value="1"/>
</dbReference>
<dbReference type="PROSITE" id="PS01126">
    <property type="entry name" value="EF_TS_1"/>
    <property type="match status" value="1"/>
</dbReference>
<dbReference type="PROSITE" id="PS01127">
    <property type="entry name" value="EF_TS_2"/>
    <property type="match status" value="1"/>
</dbReference>
<feature type="chain" id="PRO_1000189883" description="Elongation factor Ts">
    <location>
        <begin position="1"/>
        <end position="346"/>
    </location>
</feature>
<feature type="region of interest" description="Involved in Mg(2+) ion dislocation from EF-Tu" evidence="1">
    <location>
        <begin position="80"/>
        <end position="83"/>
    </location>
</feature>
<sequence>MAEITAKLVKELREKSGAGVMDAKKALVETDGDIEKAIELLREKGMAKAAKKADRVAAEGLTGVYVNGNVAAVIEVNAETDFVAKNAQFVELVNTTAKVIAEGKPANNEEALALIMPSGETLEAAYVSATATIGEKISFRRFALIEKTDAQHFGAYQHNGGRIGVISVVEGGDEALAKQLSMHIAAMKPTVLSYKELDEQFVKDELAQLNHVIDQDNESRAMVNKPALPHLKYGSKAQLTDDVIAQAEADIKAELAAEGKPEKIWDKIIPGKMDRFMLDNTKVDQAYTLLAQVYIMDDSKTVEAYLESVNASVVEFARFEVGEGIEKAANDFEAEVAATMAAALNN</sequence>
<comment type="function">
    <text evidence="1">Associates with the EF-Tu.GDP complex and induces the exchange of GDP to GTP. It remains bound to the aminoacyl-tRNA.EF-Tu.GTP complex up to the GTP hydrolysis stage on the ribosome.</text>
</comment>
<comment type="subcellular location">
    <subcellularLocation>
        <location evidence="1">Cytoplasm</location>
    </subcellularLocation>
</comment>
<comment type="similarity">
    <text evidence="1">Belongs to the EF-Ts family.</text>
</comment>
<gene>
    <name evidence="1" type="primary">tsf</name>
    <name type="ordered locus">SPP_2266</name>
</gene>
<evidence type="ECO:0000255" key="1">
    <source>
        <dbReference type="HAMAP-Rule" id="MF_00050"/>
    </source>
</evidence>
<protein>
    <recommendedName>
        <fullName evidence="1">Elongation factor Ts</fullName>
        <shortName evidence="1">EF-Ts</shortName>
    </recommendedName>
</protein>
<accession>C1CNI7</accession>
<organism>
    <name type="scientific">Streptococcus pneumoniae (strain P1031)</name>
    <dbReference type="NCBI Taxonomy" id="488223"/>
    <lineage>
        <taxon>Bacteria</taxon>
        <taxon>Bacillati</taxon>
        <taxon>Bacillota</taxon>
        <taxon>Bacilli</taxon>
        <taxon>Lactobacillales</taxon>
        <taxon>Streptococcaceae</taxon>
        <taxon>Streptococcus</taxon>
    </lineage>
</organism>
<name>EFTS_STRZP</name>
<proteinExistence type="inferred from homology"/>
<reference key="1">
    <citation type="journal article" date="2010" name="Genome Biol.">
        <title>Structure and dynamics of the pan-genome of Streptococcus pneumoniae and closely related species.</title>
        <authorList>
            <person name="Donati C."/>
            <person name="Hiller N.L."/>
            <person name="Tettelin H."/>
            <person name="Muzzi A."/>
            <person name="Croucher N.J."/>
            <person name="Angiuoli S.V."/>
            <person name="Oggioni M."/>
            <person name="Dunning Hotopp J.C."/>
            <person name="Hu F.Z."/>
            <person name="Riley D.R."/>
            <person name="Covacci A."/>
            <person name="Mitchell T.J."/>
            <person name="Bentley S.D."/>
            <person name="Kilian M."/>
            <person name="Ehrlich G.D."/>
            <person name="Rappuoli R."/>
            <person name="Moxon E.R."/>
            <person name="Masignani V."/>
        </authorList>
    </citation>
    <scope>NUCLEOTIDE SEQUENCE [LARGE SCALE GENOMIC DNA]</scope>
    <source>
        <strain>P1031</strain>
    </source>
</reference>